<accession>Q7XR61</accession>
<accession>A0A0P0WG57</accession>
<accession>Q6PMT1</accession>
<proteinExistence type="evidence at protein level"/>
<reference key="1">
    <citation type="journal article" date="2004" name="Plant Physiol.">
        <title>Functional analysis of methylthioribose kinase genes in plants.</title>
        <authorList>
            <person name="Sauter M."/>
            <person name="Cornell K.A."/>
            <person name="Beszteri S."/>
            <person name="Rzewuski G."/>
        </authorList>
    </citation>
    <scope>NUCLEOTIDE SEQUENCE [MRNA]</scope>
    <scope>FUNCTION</scope>
    <scope>CATALYTIC ACTIVITY</scope>
    <scope>INDUCTION</scope>
</reference>
<reference key="2">
    <citation type="journal article" date="2002" name="Nature">
        <title>Sequence and analysis of rice chromosome 4.</title>
        <authorList>
            <person name="Feng Q."/>
            <person name="Zhang Y."/>
            <person name="Hao P."/>
            <person name="Wang S."/>
            <person name="Fu G."/>
            <person name="Huang Y."/>
            <person name="Li Y."/>
            <person name="Zhu J."/>
            <person name="Liu Y."/>
            <person name="Hu X."/>
            <person name="Jia P."/>
            <person name="Zhang Y."/>
            <person name="Zhao Q."/>
            <person name="Ying K."/>
            <person name="Yu S."/>
            <person name="Tang Y."/>
            <person name="Weng Q."/>
            <person name="Zhang L."/>
            <person name="Lu Y."/>
            <person name="Mu J."/>
            <person name="Lu Y."/>
            <person name="Zhang L.S."/>
            <person name="Yu Z."/>
            <person name="Fan D."/>
            <person name="Liu X."/>
            <person name="Lu T."/>
            <person name="Li C."/>
            <person name="Wu Y."/>
            <person name="Sun T."/>
            <person name="Lei H."/>
            <person name="Li T."/>
            <person name="Hu H."/>
            <person name="Guan J."/>
            <person name="Wu M."/>
            <person name="Zhang R."/>
            <person name="Zhou B."/>
            <person name="Chen Z."/>
            <person name="Chen L."/>
            <person name="Jin Z."/>
            <person name="Wang R."/>
            <person name="Yin H."/>
            <person name="Cai Z."/>
            <person name="Ren S."/>
            <person name="Lv G."/>
            <person name="Gu W."/>
            <person name="Zhu G."/>
            <person name="Tu Y."/>
            <person name="Jia J."/>
            <person name="Zhang Y."/>
            <person name="Chen J."/>
            <person name="Kang H."/>
            <person name="Chen X."/>
            <person name="Shao C."/>
            <person name="Sun Y."/>
            <person name="Hu Q."/>
            <person name="Zhang X."/>
            <person name="Zhang W."/>
            <person name="Wang L."/>
            <person name="Ding C."/>
            <person name="Sheng H."/>
            <person name="Gu J."/>
            <person name="Chen S."/>
            <person name="Ni L."/>
            <person name="Zhu F."/>
            <person name="Chen W."/>
            <person name="Lan L."/>
            <person name="Lai Y."/>
            <person name="Cheng Z."/>
            <person name="Gu M."/>
            <person name="Jiang J."/>
            <person name="Li J."/>
            <person name="Hong G."/>
            <person name="Xue Y."/>
            <person name="Han B."/>
        </authorList>
    </citation>
    <scope>NUCLEOTIDE SEQUENCE [LARGE SCALE GENOMIC DNA]</scope>
    <source>
        <strain>cv. Nipponbare</strain>
    </source>
</reference>
<reference key="3">
    <citation type="journal article" date="2005" name="Nature">
        <title>The map-based sequence of the rice genome.</title>
        <authorList>
            <consortium name="International rice genome sequencing project (IRGSP)"/>
        </authorList>
    </citation>
    <scope>NUCLEOTIDE SEQUENCE [LARGE SCALE GENOMIC DNA]</scope>
    <source>
        <strain>cv. Nipponbare</strain>
    </source>
</reference>
<reference key="4">
    <citation type="journal article" date="2008" name="Nucleic Acids Res.">
        <title>The rice annotation project database (RAP-DB): 2008 update.</title>
        <authorList>
            <consortium name="The rice annotation project (RAP)"/>
        </authorList>
    </citation>
    <scope>GENOME REANNOTATION</scope>
    <source>
        <strain>cv. Nipponbare</strain>
    </source>
</reference>
<reference key="5">
    <citation type="journal article" date="2013" name="Rice">
        <title>Improvement of the Oryza sativa Nipponbare reference genome using next generation sequence and optical map data.</title>
        <authorList>
            <person name="Kawahara Y."/>
            <person name="de la Bastide M."/>
            <person name="Hamilton J.P."/>
            <person name="Kanamori H."/>
            <person name="McCombie W.R."/>
            <person name="Ouyang S."/>
            <person name="Schwartz D.C."/>
            <person name="Tanaka T."/>
            <person name="Wu J."/>
            <person name="Zhou S."/>
            <person name="Childs K.L."/>
            <person name="Davidson R.M."/>
            <person name="Lin H."/>
            <person name="Quesada-Ocampo L."/>
            <person name="Vaillancourt B."/>
            <person name="Sakai H."/>
            <person name="Lee S.S."/>
            <person name="Kim J."/>
            <person name="Numa H."/>
            <person name="Itoh T."/>
            <person name="Buell C.R."/>
            <person name="Matsumoto T."/>
        </authorList>
    </citation>
    <scope>GENOME REANNOTATION</scope>
    <source>
        <strain>cv. Nipponbare</strain>
    </source>
</reference>
<reference key="6">
    <citation type="journal article" date="2005" name="PLoS Biol.">
        <title>The genomes of Oryza sativa: a history of duplications.</title>
        <authorList>
            <person name="Yu J."/>
            <person name="Wang J."/>
            <person name="Lin W."/>
            <person name="Li S."/>
            <person name="Li H."/>
            <person name="Zhou J."/>
            <person name="Ni P."/>
            <person name="Dong W."/>
            <person name="Hu S."/>
            <person name="Zeng C."/>
            <person name="Zhang J."/>
            <person name="Zhang Y."/>
            <person name="Li R."/>
            <person name="Xu Z."/>
            <person name="Li S."/>
            <person name="Li X."/>
            <person name="Zheng H."/>
            <person name="Cong L."/>
            <person name="Lin L."/>
            <person name="Yin J."/>
            <person name="Geng J."/>
            <person name="Li G."/>
            <person name="Shi J."/>
            <person name="Liu J."/>
            <person name="Lv H."/>
            <person name="Li J."/>
            <person name="Wang J."/>
            <person name="Deng Y."/>
            <person name="Ran L."/>
            <person name="Shi X."/>
            <person name="Wang X."/>
            <person name="Wu Q."/>
            <person name="Li C."/>
            <person name="Ren X."/>
            <person name="Wang J."/>
            <person name="Wang X."/>
            <person name="Li D."/>
            <person name="Liu D."/>
            <person name="Zhang X."/>
            <person name="Ji Z."/>
            <person name="Zhao W."/>
            <person name="Sun Y."/>
            <person name="Zhang Z."/>
            <person name="Bao J."/>
            <person name="Han Y."/>
            <person name="Dong L."/>
            <person name="Ji J."/>
            <person name="Chen P."/>
            <person name="Wu S."/>
            <person name="Liu J."/>
            <person name="Xiao Y."/>
            <person name="Bu D."/>
            <person name="Tan J."/>
            <person name="Yang L."/>
            <person name="Ye C."/>
            <person name="Zhang J."/>
            <person name="Xu J."/>
            <person name="Zhou Y."/>
            <person name="Yu Y."/>
            <person name="Zhang B."/>
            <person name="Zhuang S."/>
            <person name="Wei H."/>
            <person name="Liu B."/>
            <person name="Lei M."/>
            <person name="Yu H."/>
            <person name="Li Y."/>
            <person name="Xu H."/>
            <person name="Wei S."/>
            <person name="He X."/>
            <person name="Fang L."/>
            <person name="Zhang Z."/>
            <person name="Zhang Y."/>
            <person name="Huang X."/>
            <person name="Su Z."/>
            <person name="Tong W."/>
            <person name="Li J."/>
            <person name="Tong Z."/>
            <person name="Li S."/>
            <person name="Ye J."/>
            <person name="Wang L."/>
            <person name="Fang L."/>
            <person name="Lei T."/>
            <person name="Chen C.-S."/>
            <person name="Chen H.-C."/>
            <person name="Xu Z."/>
            <person name="Li H."/>
            <person name="Huang H."/>
            <person name="Zhang F."/>
            <person name="Xu H."/>
            <person name="Li N."/>
            <person name="Zhao C."/>
            <person name="Li S."/>
            <person name="Dong L."/>
            <person name="Huang Y."/>
            <person name="Li L."/>
            <person name="Xi Y."/>
            <person name="Qi Q."/>
            <person name="Li W."/>
            <person name="Zhang B."/>
            <person name="Hu W."/>
            <person name="Zhang Y."/>
            <person name="Tian X."/>
            <person name="Jiao Y."/>
            <person name="Liang X."/>
            <person name="Jin J."/>
            <person name="Gao L."/>
            <person name="Zheng W."/>
            <person name="Hao B."/>
            <person name="Liu S.-M."/>
            <person name="Wang W."/>
            <person name="Yuan L."/>
            <person name="Cao M."/>
            <person name="McDermott J."/>
            <person name="Samudrala R."/>
            <person name="Wang J."/>
            <person name="Wong G.K.-S."/>
            <person name="Yang H."/>
        </authorList>
    </citation>
    <scope>NUCLEOTIDE SEQUENCE [LARGE SCALE GENOMIC DNA]</scope>
    <source>
        <strain>cv. Nipponbare</strain>
    </source>
</reference>
<reference key="7">
    <citation type="journal article" date="2003" name="Science">
        <title>Collection, mapping, and annotation of over 28,000 cDNA clones from japonica rice.</title>
        <authorList>
            <consortium name="The rice full-length cDNA consortium"/>
        </authorList>
    </citation>
    <scope>NUCLEOTIDE SEQUENCE [LARGE SCALE MRNA]</scope>
    <source>
        <strain>cv. Nipponbare</strain>
    </source>
</reference>
<organism>
    <name type="scientific">Oryza sativa subsp. japonica</name>
    <name type="common">Rice</name>
    <dbReference type="NCBI Taxonomy" id="39947"/>
    <lineage>
        <taxon>Eukaryota</taxon>
        <taxon>Viridiplantae</taxon>
        <taxon>Streptophyta</taxon>
        <taxon>Embryophyta</taxon>
        <taxon>Tracheophyta</taxon>
        <taxon>Spermatophyta</taxon>
        <taxon>Magnoliopsida</taxon>
        <taxon>Liliopsida</taxon>
        <taxon>Poales</taxon>
        <taxon>Poaceae</taxon>
        <taxon>BOP clade</taxon>
        <taxon>Oryzoideae</taxon>
        <taxon>Oryzeae</taxon>
        <taxon>Oryzinae</taxon>
        <taxon>Oryza</taxon>
        <taxon>Oryza sativa</taxon>
    </lineage>
</organism>
<sequence>MAAAAEQQQQQQQQGFRPLDEASLVAYIKATPALAARLGGSLDALTIKEVGDGNLNFVYIVLSDAGSVVIKQALPYIRCVGDSWPMTRERAYFEASALQKHRGLCPDHVPEVYHFDRAMSLIGMRYIEPPHIILRKGLIAGVEYPLLAEHMADYMAKTLFFTSLLYNSTTDHKKGVAQYCDNVEMCRLTEQVVFSDPYMLAKYNRCTSPFLDNDAAAVREDAELKLEIAELKSMFIERAQALLHGDLHTGSIMVTPDSTQVIDPEFAFYGPMGYDIGAFLGNLILAYFSQDGHADQANDRKAYKKWILKTIEDSWNLFHKKFVELWNKHKDGNGEAYLPPIYNSSELLCLAQKKYMTSLFHDSLGFGSAKMIRRIVGIAHVEDFESIEDASKRASCERRALNCAKAILKGRRQFESIGQVIVHVQSFDRD</sequence>
<name>MTK1_ORYSJ</name>
<protein>
    <recommendedName>
        <fullName evidence="3">Methylthioribose kinase 1</fullName>
        <shortName evidence="3">MTR kinase 1</shortName>
        <shortName evidence="3">OsMTK1</shortName>
        <ecNumber evidence="2">2.7.1.100</ecNumber>
    </recommendedName>
</protein>
<feature type="chain" id="PRO_0000401364" description="Methylthioribose kinase 1">
    <location>
        <begin position="1"/>
        <end position="430"/>
    </location>
</feature>
<feature type="binding site" evidence="1">
    <location>
        <begin position="52"/>
        <end position="56"/>
    </location>
    <ligand>
        <name>ATP</name>
        <dbReference type="ChEBI" id="CHEBI:30616"/>
    </ligand>
</feature>
<feature type="binding site" evidence="1">
    <location>
        <position position="56"/>
    </location>
    <ligand>
        <name>substrate</name>
    </ligand>
</feature>
<feature type="binding site" evidence="1">
    <location>
        <position position="71"/>
    </location>
    <ligand>
        <name>ATP</name>
        <dbReference type="ChEBI" id="CHEBI:30616"/>
    </ligand>
</feature>
<feature type="binding site" evidence="1">
    <location>
        <begin position="125"/>
        <end position="127"/>
    </location>
    <ligand>
        <name>ATP</name>
        <dbReference type="ChEBI" id="CHEBI:30616"/>
    </ligand>
</feature>
<feature type="binding site" evidence="1">
    <location>
        <position position="246"/>
    </location>
    <ligand>
        <name>substrate</name>
    </ligand>
</feature>
<feature type="binding site" evidence="1">
    <location>
        <begin position="263"/>
        <end position="265"/>
    </location>
    <ligand>
        <name>ATP</name>
        <dbReference type="ChEBI" id="CHEBI:30616"/>
    </ligand>
</feature>
<feature type="binding site" evidence="1">
    <location>
        <position position="373"/>
    </location>
    <ligand>
        <name>substrate</name>
    </ligand>
</feature>
<feature type="sequence conflict" description="In Ref. 1; AAT06025." evidence="4" ref="1">
    <original>Q</original>
    <variation>QQ</variation>
    <location>
        <position position="72"/>
    </location>
</feature>
<feature type="sequence conflict" description="In Ref. 1; AAT06025." evidence="4" ref="1">
    <original>G</original>
    <variation>A</variation>
    <location>
        <position position="175"/>
    </location>
</feature>
<feature type="sequence conflict" description="In Ref. 1; AAT06025." evidence="4" ref="1">
    <original>A</original>
    <variation>V</variation>
    <location>
        <position position="302"/>
    </location>
</feature>
<feature type="sequence conflict" description="In Ref. 1; AAT06025." evidence="4" ref="1">
    <original>C</original>
    <variation>R</variation>
    <location>
        <position position="349"/>
    </location>
</feature>
<gene>
    <name evidence="3" type="primary">MTK1</name>
    <name evidence="5" type="ordered locus">Os04g0669800</name>
    <name evidence="4" type="ordered locus">LOC_Os04g57400</name>
    <name evidence="7" type="ORF">OsJ_16565</name>
    <name evidence="6" type="ORF">OSJNBa0043A12.24</name>
</gene>
<keyword id="KW-0028">Amino-acid biosynthesis</keyword>
<keyword id="KW-0067">ATP-binding</keyword>
<keyword id="KW-0418">Kinase</keyword>
<keyword id="KW-0486">Methionine biosynthesis</keyword>
<keyword id="KW-0547">Nucleotide-binding</keyword>
<keyword id="KW-1185">Reference proteome</keyword>
<keyword id="KW-0808">Transferase</keyword>
<evidence type="ECO:0000250" key="1">
    <source>
        <dbReference type="UniProtKB" id="Q9C6D2"/>
    </source>
</evidence>
<evidence type="ECO:0000269" key="2">
    <source>
    </source>
</evidence>
<evidence type="ECO:0000303" key="3">
    <source>
    </source>
</evidence>
<evidence type="ECO:0000305" key="4"/>
<evidence type="ECO:0000312" key="5">
    <source>
        <dbReference type="EMBL" id="BAS91547.1"/>
    </source>
</evidence>
<evidence type="ECO:0000312" key="6">
    <source>
        <dbReference type="EMBL" id="CAE02819.1"/>
    </source>
</evidence>
<evidence type="ECO:0000312" key="7">
    <source>
        <dbReference type="EMBL" id="EAZ32355.1"/>
    </source>
</evidence>
<dbReference type="EC" id="2.7.1.100" evidence="2"/>
<dbReference type="EMBL" id="AY593959">
    <property type="protein sequence ID" value="AAT06025.1"/>
    <property type="molecule type" value="mRNA"/>
</dbReference>
<dbReference type="EMBL" id="AL606619">
    <property type="protein sequence ID" value="CAE02819.1"/>
    <property type="molecule type" value="Genomic_DNA"/>
</dbReference>
<dbReference type="EMBL" id="AP008210">
    <property type="protein sequence ID" value="BAF16121.1"/>
    <property type="molecule type" value="Genomic_DNA"/>
</dbReference>
<dbReference type="EMBL" id="AP014960">
    <property type="protein sequence ID" value="BAS91547.1"/>
    <property type="molecule type" value="Genomic_DNA"/>
</dbReference>
<dbReference type="EMBL" id="CM000141">
    <property type="protein sequence ID" value="EAZ32355.1"/>
    <property type="molecule type" value="Genomic_DNA"/>
</dbReference>
<dbReference type="EMBL" id="AK067649">
    <property type="protein sequence ID" value="BAG90516.1"/>
    <property type="molecule type" value="mRNA"/>
</dbReference>
<dbReference type="RefSeq" id="XP_015635941.1">
    <property type="nucleotide sequence ID" value="XM_015780455.1"/>
</dbReference>
<dbReference type="SMR" id="Q7XR61"/>
<dbReference type="FunCoup" id="Q7XR61">
    <property type="interactions" value="978"/>
</dbReference>
<dbReference type="STRING" id="39947.Q7XR61"/>
<dbReference type="PaxDb" id="39947-Q7XR61"/>
<dbReference type="EnsemblPlants" id="Os04t0669800-01">
    <property type="protein sequence ID" value="Os04t0669800-01"/>
    <property type="gene ID" value="Os04g0669800"/>
</dbReference>
<dbReference type="Gramene" id="Os04t0669800-01">
    <property type="protein sequence ID" value="Os04t0669800-01"/>
    <property type="gene ID" value="Os04g0669800"/>
</dbReference>
<dbReference type="KEGG" id="dosa:Os04g0669800"/>
<dbReference type="eggNOG" id="ENOG502QVM3">
    <property type="taxonomic scope" value="Eukaryota"/>
</dbReference>
<dbReference type="HOGENOM" id="CLU_033681_0_0_1"/>
<dbReference type="InParanoid" id="Q7XR61"/>
<dbReference type="OMA" id="EMCEITE"/>
<dbReference type="OrthoDB" id="2461at2759"/>
<dbReference type="BioCyc" id="MetaCyc:MONOMER-10424"/>
<dbReference type="BRENDA" id="2.7.1.100">
    <property type="organism ID" value="4460"/>
</dbReference>
<dbReference type="PlantReactome" id="R-OSA-1119624">
    <property type="pathway name" value="Methionine salvage pathway"/>
</dbReference>
<dbReference type="UniPathway" id="UPA00904">
    <property type="reaction ID" value="UER00872"/>
</dbReference>
<dbReference type="Proteomes" id="UP000000763">
    <property type="component" value="Chromosome 4"/>
</dbReference>
<dbReference type="Proteomes" id="UP000007752">
    <property type="component" value="Chromosome 4"/>
</dbReference>
<dbReference type="Proteomes" id="UP000059680">
    <property type="component" value="Chromosome 4"/>
</dbReference>
<dbReference type="GO" id="GO:0005524">
    <property type="term" value="F:ATP binding"/>
    <property type="evidence" value="ECO:0007669"/>
    <property type="project" value="UniProtKB-KW"/>
</dbReference>
<dbReference type="GO" id="GO:0046522">
    <property type="term" value="F:S-methyl-5-thioribose kinase activity"/>
    <property type="evidence" value="ECO:0000314"/>
    <property type="project" value="UniProtKB"/>
</dbReference>
<dbReference type="GO" id="GO:0019509">
    <property type="term" value="P:L-methionine salvage from methylthioadenosine"/>
    <property type="evidence" value="ECO:0007669"/>
    <property type="project" value="UniProtKB-UniPathway"/>
</dbReference>
<dbReference type="FunFam" id="3.30.200.20:FF:000571">
    <property type="entry name" value="Methylthioribose kinase"/>
    <property type="match status" value="1"/>
</dbReference>
<dbReference type="FunFam" id="3.90.1200.10:FF:000013">
    <property type="entry name" value="Methylthioribose kinase"/>
    <property type="match status" value="1"/>
</dbReference>
<dbReference type="Gene3D" id="3.90.1200.10">
    <property type="match status" value="1"/>
</dbReference>
<dbReference type="Gene3D" id="3.30.200.20">
    <property type="entry name" value="Phosphorylase Kinase, domain 1"/>
    <property type="match status" value="1"/>
</dbReference>
<dbReference type="InterPro" id="IPR002575">
    <property type="entry name" value="Aminoglycoside_PTrfase"/>
</dbReference>
<dbReference type="InterPro" id="IPR011009">
    <property type="entry name" value="Kinase-like_dom_sf"/>
</dbReference>
<dbReference type="InterPro" id="IPR009212">
    <property type="entry name" value="Methylthioribose_kinase"/>
</dbReference>
<dbReference type="NCBIfam" id="TIGR01767">
    <property type="entry name" value="MTRK"/>
    <property type="match status" value="1"/>
</dbReference>
<dbReference type="PANTHER" id="PTHR34273">
    <property type="entry name" value="METHYLTHIORIBOSE KINASE"/>
    <property type="match status" value="1"/>
</dbReference>
<dbReference type="PANTHER" id="PTHR34273:SF2">
    <property type="entry name" value="METHYLTHIORIBOSE KINASE"/>
    <property type="match status" value="1"/>
</dbReference>
<dbReference type="Pfam" id="PF01636">
    <property type="entry name" value="APH"/>
    <property type="match status" value="1"/>
</dbReference>
<dbReference type="PIRSF" id="PIRSF031134">
    <property type="entry name" value="MTRK"/>
    <property type="match status" value="1"/>
</dbReference>
<dbReference type="SUPFAM" id="SSF56112">
    <property type="entry name" value="Protein kinase-like (PK-like)"/>
    <property type="match status" value="1"/>
</dbReference>
<comment type="function">
    <text evidence="2">Catalyzes the phosphorylation of methylthioribose into methylthioribose-1-phosphate.</text>
</comment>
<comment type="catalytic activity">
    <reaction evidence="2">
        <text>5-(methylsulfanyl)-D-ribose + ATP = 5-(methylsulfanyl)-alpha-D-ribose 1-phosphate + ADP + H(+)</text>
        <dbReference type="Rhea" id="RHEA:22312"/>
        <dbReference type="ChEBI" id="CHEBI:15378"/>
        <dbReference type="ChEBI" id="CHEBI:30616"/>
        <dbReference type="ChEBI" id="CHEBI:58533"/>
        <dbReference type="ChEBI" id="CHEBI:78440"/>
        <dbReference type="ChEBI" id="CHEBI:456216"/>
        <dbReference type="EC" id="2.7.1.100"/>
    </reaction>
    <physiologicalReaction direction="left-to-right" evidence="2">
        <dbReference type="Rhea" id="RHEA:22313"/>
    </physiologicalReaction>
</comment>
<comment type="pathway">
    <text evidence="4">Amino-acid biosynthesis; L-methionine biosynthesis via salvage pathway; S-methyl-5-thio-alpha-D-ribose 1-phosphate from S-methyl-5'-thioadenosine (hydrolase route): step 2/2.</text>
</comment>
<comment type="subunit">
    <text evidence="1">Homodimer.</text>
</comment>
<comment type="induction">
    <text evidence="2">By sulfur starvation.</text>
</comment>
<comment type="similarity">
    <text evidence="4">Belongs to the methylthioribose kinase family.</text>
</comment>